<feature type="chain" id="PRO_1000069516" description="3-ketoacyl-CoA thiolase">
    <location>
        <begin position="1"/>
        <end position="436"/>
    </location>
</feature>
<feature type="active site" description="Acyl-thioester intermediate" evidence="1">
    <location>
        <position position="99"/>
    </location>
</feature>
<feature type="active site" description="Proton acceptor" evidence="1">
    <location>
        <position position="392"/>
    </location>
</feature>
<feature type="active site" description="Proton acceptor" evidence="1">
    <location>
        <position position="422"/>
    </location>
</feature>
<dbReference type="EC" id="2.3.1.16" evidence="1"/>
<dbReference type="EMBL" id="CP000503">
    <property type="protein sequence ID" value="ABM24386.1"/>
    <property type="molecule type" value="Genomic_DNA"/>
</dbReference>
<dbReference type="RefSeq" id="WP_011788887.1">
    <property type="nucleotide sequence ID" value="NC_008750.1"/>
</dbReference>
<dbReference type="SMR" id="A1RI91"/>
<dbReference type="KEGG" id="shw:Sputw3181_1548"/>
<dbReference type="HOGENOM" id="CLU_031026_2_0_6"/>
<dbReference type="UniPathway" id="UPA00659"/>
<dbReference type="Proteomes" id="UP000002597">
    <property type="component" value="Chromosome"/>
</dbReference>
<dbReference type="GO" id="GO:0005829">
    <property type="term" value="C:cytosol"/>
    <property type="evidence" value="ECO:0007669"/>
    <property type="project" value="TreeGrafter"/>
</dbReference>
<dbReference type="GO" id="GO:0003988">
    <property type="term" value="F:acetyl-CoA C-acyltransferase activity"/>
    <property type="evidence" value="ECO:0007669"/>
    <property type="project" value="UniProtKB-UniRule"/>
</dbReference>
<dbReference type="GO" id="GO:0006635">
    <property type="term" value="P:fatty acid beta-oxidation"/>
    <property type="evidence" value="ECO:0007669"/>
    <property type="project" value="UniProtKB-UniRule"/>
</dbReference>
<dbReference type="CDD" id="cd00751">
    <property type="entry name" value="thiolase"/>
    <property type="match status" value="1"/>
</dbReference>
<dbReference type="FunFam" id="3.40.47.10:FF:000011">
    <property type="entry name" value="3-ketoacyl-CoA thiolase"/>
    <property type="match status" value="1"/>
</dbReference>
<dbReference type="Gene3D" id="3.40.47.10">
    <property type="match status" value="1"/>
</dbReference>
<dbReference type="HAMAP" id="MF_01618">
    <property type="entry name" value="FadI"/>
    <property type="match status" value="1"/>
</dbReference>
<dbReference type="InterPro" id="IPR012806">
    <property type="entry name" value="Ac-CoA_C-AcTrfase_FadI"/>
</dbReference>
<dbReference type="InterPro" id="IPR002155">
    <property type="entry name" value="Thiolase"/>
</dbReference>
<dbReference type="InterPro" id="IPR016039">
    <property type="entry name" value="Thiolase-like"/>
</dbReference>
<dbReference type="InterPro" id="IPR020610">
    <property type="entry name" value="Thiolase_AS"/>
</dbReference>
<dbReference type="InterPro" id="IPR020617">
    <property type="entry name" value="Thiolase_C"/>
</dbReference>
<dbReference type="InterPro" id="IPR020613">
    <property type="entry name" value="Thiolase_CS"/>
</dbReference>
<dbReference type="InterPro" id="IPR020616">
    <property type="entry name" value="Thiolase_N"/>
</dbReference>
<dbReference type="NCBIfam" id="TIGR01930">
    <property type="entry name" value="AcCoA-C-Actrans"/>
    <property type="match status" value="1"/>
</dbReference>
<dbReference type="NCBIfam" id="TIGR02446">
    <property type="entry name" value="FadI"/>
    <property type="match status" value="1"/>
</dbReference>
<dbReference type="NCBIfam" id="NF006516">
    <property type="entry name" value="PRK08963.1"/>
    <property type="match status" value="1"/>
</dbReference>
<dbReference type="PANTHER" id="PTHR18919:SF107">
    <property type="entry name" value="ACETYL-COA ACETYLTRANSFERASE, CYTOSOLIC"/>
    <property type="match status" value="1"/>
</dbReference>
<dbReference type="PANTHER" id="PTHR18919">
    <property type="entry name" value="ACETYL-COA C-ACYLTRANSFERASE"/>
    <property type="match status" value="1"/>
</dbReference>
<dbReference type="Pfam" id="PF02803">
    <property type="entry name" value="Thiolase_C"/>
    <property type="match status" value="1"/>
</dbReference>
<dbReference type="Pfam" id="PF00108">
    <property type="entry name" value="Thiolase_N"/>
    <property type="match status" value="1"/>
</dbReference>
<dbReference type="PIRSF" id="PIRSF000429">
    <property type="entry name" value="Ac-CoA_Ac_transf"/>
    <property type="match status" value="1"/>
</dbReference>
<dbReference type="SUPFAM" id="SSF53901">
    <property type="entry name" value="Thiolase-like"/>
    <property type="match status" value="2"/>
</dbReference>
<dbReference type="PROSITE" id="PS00737">
    <property type="entry name" value="THIOLASE_2"/>
    <property type="match status" value="1"/>
</dbReference>
<dbReference type="PROSITE" id="PS00099">
    <property type="entry name" value="THIOLASE_3"/>
    <property type="match status" value="1"/>
</dbReference>
<keyword id="KW-0012">Acyltransferase</keyword>
<keyword id="KW-0963">Cytoplasm</keyword>
<keyword id="KW-0276">Fatty acid metabolism</keyword>
<keyword id="KW-0442">Lipid degradation</keyword>
<keyword id="KW-0443">Lipid metabolism</keyword>
<keyword id="KW-0808">Transferase</keyword>
<reference key="1">
    <citation type="submission" date="2006-12" db="EMBL/GenBank/DDBJ databases">
        <title>Complete sequence of Shewanella sp. W3-18-1.</title>
        <authorList>
            <consortium name="US DOE Joint Genome Institute"/>
            <person name="Copeland A."/>
            <person name="Lucas S."/>
            <person name="Lapidus A."/>
            <person name="Barry K."/>
            <person name="Detter J.C."/>
            <person name="Glavina del Rio T."/>
            <person name="Hammon N."/>
            <person name="Israni S."/>
            <person name="Dalin E."/>
            <person name="Tice H."/>
            <person name="Pitluck S."/>
            <person name="Chain P."/>
            <person name="Malfatti S."/>
            <person name="Shin M."/>
            <person name="Vergez L."/>
            <person name="Schmutz J."/>
            <person name="Larimer F."/>
            <person name="Land M."/>
            <person name="Hauser L."/>
            <person name="Kyrpides N."/>
            <person name="Lykidis A."/>
            <person name="Tiedje J."/>
            <person name="Richardson P."/>
        </authorList>
    </citation>
    <scope>NUCLEOTIDE SEQUENCE [LARGE SCALE GENOMIC DNA]</scope>
    <source>
        <strain>W3-18-1</strain>
    </source>
</reference>
<gene>
    <name evidence="1" type="primary">fadI</name>
    <name type="ordered locus">Sputw3181_1548</name>
</gene>
<organism>
    <name type="scientific">Shewanella sp. (strain W3-18-1)</name>
    <dbReference type="NCBI Taxonomy" id="351745"/>
    <lineage>
        <taxon>Bacteria</taxon>
        <taxon>Pseudomonadati</taxon>
        <taxon>Pseudomonadota</taxon>
        <taxon>Gammaproteobacteria</taxon>
        <taxon>Alteromonadales</taxon>
        <taxon>Shewanellaceae</taxon>
        <taxon>Shewanella</taxon>
    </lineage>
</organism>
<evidence type="ECO:0000255" key="1">
    <source>
        <dbReference type="HAMAP-Rule" id="MF_01618"/>
    </source>
</evidence>
<proteinExistence type="inferred from homology"/>
<name>FADI_SHESW</name>
<comment type="function">
    <text evidence="1">Catalyzes the final step of fatty acid oxidation in which acetyl-CoA is released and the CoA ester of a fatty acid two carbons shorter is formed.</text>
</comment>
<comment type="catalytic activity">
    <reaction evidence="1">
        <text>an acyl-CoA + acetyl-CoA = a 3-oxoacyl-CoA + CoA</text>
        <dbReference type="Rhea" id="RHEA:21564"/>
        <dbReference type="ChEBI" id="CHEBI:57287"/>
        <dbReference type="ChEBI" id="CHEBI:57288"/>
        <dbReference type="ChEBI" id="CHEBI:58342"/>
        <dbReference type="ChEBI" id="CHEBI:90726"/>
        <dbReference type="EC" id="2.3.1.16"/>
    </reaction>
</comment>
<comment type="pathway">
    <text evidence="1">Lipid metabolism; fatty acid beta-oxidation.</text>
</comment>
<comment type="subunit">
    <text evidence="1">Heterotetramer of two alpha chains (FadJ) and two beta chains (FadI).</text>
</comment>
<comment type="subcellular location">
    <subcellularLocation>
        <location evidence="1">Cytoplasm</location>
    </subcellularLocation>
</comment>
<comment type="similarity">
    <text evidence="1">Belongs to the thiolase-like superfamily. Thiolase family.</text>
</comment>
<protein>
    <recommendedName>
        <fullName evidence="1">3-ketoacyl-CoA thiolase</fullName>
        <ecNumber evidence="1">2.3.1.16</ecNumber>
    </recommendedName>
    <alternativeName>
        <fullName evidence="1">ACSs</fullName>
    </alternativeName>
    <alternativeName>
        <fullName evidence="1">Acetyl-CoA acyltransferase</fullName>
    </alternativeName>
    <alternativeName>
        <fullName evidence="1">Acyl-CoA ligase</fullName>
    </alternativeName>
    <alternativeName>
        <fullName evidence="1">Beta-ketothiolase</fullName>
    </alternativeName>
    <alternativeName>
        <fullName evidence="1">Fatty acid oxidation complex subunit beta</fullName>
    </alternativeName>
</protein>
<accession>A1RI91</accession>
<sequence>MSDRQQVTNAKGERIAIVAGLRTPFAKQATAFHGVSALDMGKMVVNELLARSELDPKLIEQLVYGQVVQMPAAPNIAREIVLGTGMNVSTDAYSVTRACATSFQSTVNVAESIMTGNIDIGIAGGADSSSVLPIGVSKKLAHALVDLNKARSFGQKLQIFRRLGLKDLLPVPPAVAEYSTGLSMGQTAEQMAKTYNISRADQDALAHRSHTLASETWASGHLRDEVMVAHIPPYKQFIDRDNNIRENSVLESYAKLRPAFDKQHGTVTAANSTPLTDGASAIILMSEGRAKALGYQPIGYIKSYAFSAIDVWQDMLMGPSYATPLALKRAGMELEDLTLIEMHEAFAAQTLANMQMFASKKFAEEKLGRNRPIGEIDMSKFNVLGGSLAYGHPFAATGTRLITQVCRELKRRGGGTGLTTACAAGGLGVAMIVEVE</sequence>